<sequence>MLAKRIIPCLDVKDGQVVKGVQFRNHEIIGDIVPLAQRYAQEGADELVFYDITASSDGRVVDKSWVARVAEVIDIPFCVAGGIKSVEDASQILTFGADKISINSPALADPTLITRLADRYGVQCIVVGIDTWYDTESDSYQVYQFTGDEKRTKATTWQTEDWVKEVQLRGAGEIVLNMMNQDGVRNGYDLRQLQQMRAICHVPLIASGGAGTPDHFLEAFRDADVDGALAASVFHKQIINIGELKKYLSEQGVEIRVC</sequence>
<gene>
    <name evidence="1" type="primary">hisF</name>
    <name type="ordered locus">YPA_0838</name>
</gene>
<name>HIS6_YERPA</name>
<accession>Q1C9R6</accession>
<comment type="function">
    <text evidence="1">IGPS catalyzes the conversion of PRFAR and glutamine to IGP, AICAR and glutamate. The HisF subunit catalyzes the cyclization activity that produces IGP and AICAR from PRFAR using the ammonia provided by the HisH subunit.</text>
</comment>
<comment type="catalytic activity">
    <reaction evidence="1">
        <text>5-[(5-phospho-1-deoxy-D-ribulos-1-ylimino)methylamino]-1-(5-phospho-beta-D-ribosyl)imidazole-4-carboxamide + L-glutamine = D-erythro-1-(imidazol-4-yl)glycerol 3-phosphate + 5-amino-1-(5-phospho-beta-D-ribosyl)imidazole-4-carboxamide + L-glutamate + H(+)</text>
        <dbReference type="Rhea" id="RHEA:24793"/>
        <dbReference type="ChEBI" id="CHEBI:15378"/>
        <dbReference type="ChEBI" id="CHEBI:29985"/>
        <dbReference type="ChEBI" id="CHEBI:58278"/>
        <dbReference type="ChEBI" id="CHEBI:58359"/>
        <dbReference type="ChEBI" id="CHEBI:58475"/>
        <dbReference type="ChEBI" id="CHEBI:58525"/>
        <dbReference type="EC" id="4.3.2.10"/>
    </reaction>
</comment>
<comment type="pathway">
    <text evidence="1">Amino-acid biosynthesis; L-histidine biosynthesis; L-histidine from 5-phospho-alpha-D-ribose 1-diphosphate: step 5/9.</text>
</comment>
<comment type="subunit">
    <text evidence="1">Heterodimer of HisH and HisF.</text>
</comment>
<comment type="subcellular location">
    <subcellularLocation>
        <location evidence="1">Cytoplasm</location>
    </subcellularLocation>
</comment>
<comment type="similarity">
    <text evidence="1">Belongs to the HisA/HisF family.</text>
</comment>
<keyword id="KW-0028">Amino-acid biosynthesis</keyword>
<keyword id="KW-0963">Cytoplasm</keyword>
<keyword id="KW-0368">Histidine biosynthesis</keyword>
<keyword id="KW-0456">Lyase</keyword>
<feature type="chain" id="PRO_1000063175" description="Imidazole glycerol phosphate synthase subunit HisF">
    <location>
        <begin position="1"/>
        <end position="258"/>
    </location>
</feature>
<feature type="active site" evidence="1">
    <location>
        <position position="11"/>
    </location>
</feature>
<feature type="active site" evidence="1">
    <location>
        <position position="130"/>
    </location>
</feature>
<proteinExistence type="inferred from homology"/>
<evidence type="ECO:0000255" key="1">
    <source>
        <dbReference type="HAMAP-Rule" id="MF_01013"/>
    </source>
</evidence>
<protein>
    <recommendedName>
        <fullName evidence="1">Imidazole glycerol phosphate synthase subunit HisF</fullName>
        <ecNumber evidence="1">4.3.2.10</ecNumber>
    </recommendedName>
    <alternativeName>
        <fullName evidence="1">IGP synthase cyclase subunit</fullName>
    </alternativeName>
    <alternativeName>
        <fullName evidence="1">IGP synthase subunit HisF</fullName>
    </alternativeName>
    <alternativeName>
        <fullName evidence="1">ImGP synthase subunit HisF</fullName>
        <shortName evidence="1">IGPS subunit HisF</shortName>
    </alternativeName>
</protein>
<dbReference type="EC" id="4.3.2.10" evidence="1"/>
<dbReference type="EMBL" id="CP000308">
    <property type="protein sequence ID" value="ABG12806.1"/>
    <property type="molecule type" value="Genomic_DNA"/>
</dbReference>
<dbReference type="RefSeq" id="WP_002211890.1">
    <property type="nucleotide sequence ID" value="NZ_CP009906.1"/>
</dbReference>
<dbReference type="SMR" id="Q1C9R6"/>
<dbReference type="GeneID" id="57977025"/>
<dbReference type="KEGG" id="ypa:YPA_0838"/>
<dbReference type="UniPathway" id="UPA00031">
    <property type="reaction ID" value="UER00010"/>
</dbReference>
<dbReference type="Proteomes" id="UP000001971">
    <property type="component" value="Chromosome"/>
</dbReference>
<dbReference type="GO" id="GO:0005737">
    <property type="term" value="C:cytoplasm"/>
    <property type="evidence" value="ECO:0007669"/>
    <property type="project" value="UniProtKB-SubCell"/>
</dbReference>
<dbReference type="GO" id="GO:0000107">
    <property type="term" value="F:imidazoleglycerol-phosphate synthase activity"/>
    <property type="evidence" value="ECO:0007669"/>
    <property type="project" value="UniProtKB-UniRule"/>
</dbReference>
<dbReference type="GO" id="GO:0016829">
    <property type="term" value="F:lyase activity"/>
    <property type="evidence" value="ECO:0007669"/>
    <property type="project" value="UniProtKB-KW"/>
</dbReference>
<dbReference type="GO" id="GO:0000105">
    <property type="term" value="P:L-histidine biosynthetic process"/>
    <property type="evidence" value="ECO:0007669"/>
    <property type="project" value="UniProtKB-UniRule"/>
</dbReference>
<dbReference type="CDD" id="cd04731">
    <property type="entry name" value="HisF"/>
    <property type="match status" value="1"/>
</dbReference>
<dbReference type="FunFam" id="3.20.20.70:FF:000006">
    <property type="entry name" value="Imidazole glycerol phosphate synthase subunit HisF"/>
    <property type="match status" value="1"/>
</dbReference>
<dbReference type="Gene3D" id="3.20.20.70">
    <property type="entry name" value="Aldolase class I"/>
    <property type="match status" value="1"/>
</dbReference>
<dbReference type="HAMAP" id="MF_01013">
    <property type="entry name" value="HisF"/>
    <property type="match status" value="1"/>
</dbReference>
<dbReference type="InterPro" id="IPR013785">
    <property type="entry name" value="Aldolase_TIM"/>
</dbReference>
<dbReference type="InterPro" id="IPR006062">
    <property type="entry name" value="His_biosynth"/>
</dbReference>
<dbReference type="InterPro" id="IPR004651">
    <property type="entry name" value="HisF"/>
</dbReference>
<dbReference type="InterPro" id="IPR050064">
    <property type="entry name" value="IGPS_HisA/HisF"/>
</dbReference>
<dbReference type="InterPro" id="IPR011060">
    <property type="entry name" value="RibuloseP-bd_barrel"/>
</dbReference>
<dbReference type="NCBIfam" id="TIGR00735">
    <property type="entry name" value="hisF"/>
    <property type="match status" value="1"/>
</dbReference>
<dbReference type="PANTHER" id="PTHR21235:SF2">
    <property type="entry name" value="IMIDAZOLE GLYCEROL PHOSPHATE SYNTHASE HISHF"/>
    <property type="match status" value="1"/>
</dbReference>
<dbReference type="PANTHER" id="PTHR21235">
    <property type="entry name" value="IMIDAZOLE GLYCEROL PHOSPHATE SYNTHASE SUBUNIT HISF/H IGP SYNTHASE SUBUNIT HISF/H"/>
    <property type="match status" value="1"/>
</dbReference>
<dbReference type="Pfam" id="PF00977">
    <property type="entry name" value="His_biosynth"/>
    <property type="match status" value="1"/>
</dbReference>
<dbReference type="SUPFAM" id="SSF51366">
    <property type="entry name" value="Ribulose-phoshate binding barrel"/>
    <property type="match status" value="1"/>
</dbReference>
<organism>
    <name type="scientific">Yersinia pestis bv. Antiqua (strain Antiqua)</name>
    <dbReference type="NCBI Taxonomy" id="360102"/>
    <lineage>
        <taxon>Bacteria</taxon>
        <taxon>Pseudomonadati</taxon>
        <taxon>Pseudomonadota</taxon>
        <taxon>Gammaproteobacteria</taxon>
        <taxon>Enterobacterales</taxon>
        <taxon>Yersiniaceae</taxon>
        <taxon>Yersinia</taxon>
    </lineage>
</organism>
<reference key="1">
    <citation type="journal article" date="2006" name="J. Bacteriol.">
        <title>Complete genome sequence of Yersinia pestis strains Antiqua and Nepal516: evidence of gene reduction in an emerging pathogen.</title>
        <authorList>
            <person name="Chain P.S.G."/>
            <person name="Hu P."/>
            <person name="Malfatti S.A."/>
            <person name="Radnedge L."/>
            <person name="Larimer F."/>
            <person name="Vergez L.M."/>
            <person name="Worsham P."/>
            <person name="Chu M.C."/>
            <person name="Andersen G.L."/>
        </authorList>
    </citation>
    <scope>NUCLEOTIDE SEQUENCE [LARGE SCALE GENOMIC DNA]</scope>
    <source>
        <strain>Antiqua</strain>
    </source>
</reference>